<sequence length="476" mass="52030">MSIQTSDPNDPNGSLKSLSLIAAHSHITGLGLDDNLQPRASSEGMVGQLQARRAAGVILRMIQNGSIAGRAILVAGPPSTGKTALAMGLSQSLGKDVPFTAITGSEIFSLELSKTEALTQAFRKSIGIKIKEETELIEGEVVEIQIDRSITGGHKQGKLTIKTTDMETIYELGNKMIDGLTKEKVLAGDVISIDKASGKITKLGRSFARSRDYDAMGYDTKFVQCPEGELQKRKTVVHTVSLHEIDVINSRTQGFLALFTGDTGEIRSEVRDQINTKVAEWKEEGKAEIVPGVLFIDEVHMLDIECFSFINRALEDEFAPIIMMATNRGISKTRGTNYKSPHGLPLDLLDRSIIITTSNYNEEEIKTILTIRAQEEEVELSPDALDLLTKTGGETSLRYSSNLISVAQQIALKRKSNTVEVADVKKAYLLFLDSSRSVKFVQENQDQYIDDNGKVIISTSGEMTQPADGEAMDTTE</sequence>
<keyword id="KW-0010">Activator</keyword>
<keyword id="KW-0067">ATP-binding</keyword>
<keyword id="KW-0156">Chromatin regulator</keyword>
<keyword id="KW-0227">DNA damage</keyword>
<keyword id="KW-0234">DNA repair</keyword>
<keyword id="KW-0347">Helicase</keyword>
<keyword id="KW-0378">Hydrolase</keyword>
<keyword id="KW-0547">Nucleotide-binding</keyword>
<keyword id="KW-0539">Nucleus</keyword>
<keyword id="KW-1185">Reference proteome</keyword>
<keyword id="KW-0698">rRNA processing</keyword>
<keyword id="KW-0804">Transcription</keyword>
<keyword id="KW-0805">Transcription regulation</keyword>
<reference key="1">
    <citation type="journal article" date="2004" name="Nature">
        <title>Genome evolution in yeasts.</title>
        <authorList>
            <person name="Dujon B."/>
            <person name="Sherman D."/>
            <person name="Fischer G."/>
            <person name="Durrens P."/>
            <person name="Casaregola S."/>
            <person name="Lafontaine I."/>
            <person name="de Montigny J."/>
            <person name="Marck C."/>
            <person name="Neuveglise C."/>
            <person name="Talla E."/>
            <person name="Goffard N."/>
            <person name="Frangeul L."/>
            <person name="Aigle M."/>
            <person name="Anthouard V."/>
            <person name="Babour A."/>
            <person name="Barbe V."/>
            <person name="Barnay S."/>
            <person name="Blanchin S."/>
            <person name="Beckerich J.-M."/>
            <person name="Beyne E."/>
            <person name="Bleykasten C."/>
            <person name="Boisrame A."/>
            <person name="Boyer J."/>
            <person name="Cattolico L."/>
            <person name="Confanioleri F."/>
            <person name="de Daruvar A."/>
            <person name="Despons L."/>
            <person name="Fabre E."/>
            <person name="Fairhead C."/>
            <person name="Ferry-Dumazet H."/>
            <person name="Groppi A."/>
            <person name="Hantraye F."/>
            <person name="Hennequin C."/>
            <person name="Jauniaux N."/>
            <person name="Joyet P."/>
            <person name="Kachouri R."/>
            <person name="Kerrest A."/>
            <person name="Koszul R."/>
            <person name="Lemaire M."/>
            <person name="Lesur I."/>
            <person name="Ma L."/>
            <person name="Muller H."/>
            <person name="Nicaud J.-M."/>
            <person name="Nikolski M."/>
            <person name="Oztas S."/>
            <person name="Ozier-Kalogeropoulos O."/>
            <person name="Pellenz S."/>
            <person name="Potier S."/>
            <person name="Richard G.-F."/>
            <person name="Straub M.-L."/>
            <person name="Suleau A."/>
            <person name="Swennen D."/>
            <person name="Tekaia F."/>
            <person name="Wesolowski-Louvel M."/>
            <person name="Westhof E."/>
            <person name="Wirth B."/>
            <person name="Zeniou-Meyer M."/>
            <person name="Zivanovic Y."/>
            <person name="Bolotin-Fukuhara M."/>
            <person name="Thierry A."/>
            <person name="Bouchier C."/>
            <person name="Caudron B."/>
            <person name="Scarpelli C."/>
            <person name="Gaillardin C."/>
            <person name="Weissenbach J."/>
            <person name="Wincker P."/>
            <person name="Souciet J.-L."/>
        </authorList>
    </citation>
    <scope>NUCLEOTIDE SEQUENCE [LARGE SCALE GENOMIC DNA]</scope>
    <source>
        <strain>ATCC 2001 / BCRC 20586 / JCM 3761 / NBRC 0622 / NRRL Y-65 / CBS 138</strain>
    </source>
</reference>
<name>RUVB2_CANGA</name>
<evidence type="ECO:0000250" key="1"/>
<evidence type="ECO:0000305" key="2"/>
<organism>
    <name type="scientific">Candida glabrata (strain ATCC 2001 / BCRC 20586 / JCM 3761 / NBRC 0622 / NRRL Y-65 / CBS 138)</name>
    <name type="common">Yeast</name>
    <name type="synonym">Nakaseomyces glabratus</name>
    <dbReference type="NCBI Taxonomy" id="284593"/>
    <lineage>
        <taxon>Eukaryota</taxon>
        <taxon>Fungi</taxon>
        <taxon>Dikarya</taxon>
        <taxon>Ascomycota</taxon>
        <taxon>Saccharomycotina</taxon>
        <taxon>Saccharomycetes</taxon>
        <taxon>Saccharomycetales</taxon>
        <taxon>Saccharomycetaceae</taxon>
        <taxon>Nakaseomyces</taxon>
    </lineage>
</organism>
<dbReference type="EC" id="3.6.4.12"/>
<dbReference type="EMBL" id="CR380954">
    <property type="protein sequence ID" value="CAG59774.1"/>
    <property type="molecule type" value="Genomic_DNA"/>
</dbReference>
<dbReference type="RefSeq" id="XP_446843.1">
    <property type="nucleotide sequence ID" value="XM_446843.1"/>
</dbReference>
<dbReference type="SMR" id="Q6FSF1"/>
<dbReference type="FunCoup" id="Q6FSF1">
    <property type="interactions" value="1746"/>
</dbReference>
<dbReference type="STRING" id="284593.Q6FSF1"/>
<dbReference type="EnsemblFungi" id="CAGL0H01001g-T">
    <property type="protein sequence ID" value="CAGL0H01001g-T-p1"/>
    <property type="gene ID" value="CAGL0H01001g"/>
</dbReference>
<dbReference type="KEGG" id="cgr:2888577"/>
<dbReference type="CGD" id="CAL0132044">
    <property type="gene designation" value="CAGL0H01001g"/>
</dbReference>
<dbReference type="VEuPathDB" id="FungiDB:B1J91_H01001g"/>
<dbReference type="VEuPathDB" id="FungiDB:CAGL0H01001g"/>
<dbReference type="eggNOG" id="KOG2680">
    <property type="taxonomic scope" value="Eukaryota"/>
</dbReference>
<dbReference type="HOGENOM" id="CLU_028311_4_0_1"/>
<dbReference type="InParanoid" id="Q6FSF1"/>
<dbReference type="OMA" id="IINTEPY"/>
<dbReference type="Proteomes" id="UP000002428">
    <property type="component" value="Chromosome H"/>
</dbReference>
<dbReference type="GO" id="GO:0031011">
    <property type="term" value="C:Ino80 complex"/>
    <property type="evidence" value="ECO:0007669"/>
    <property type="project" value="EnsemblFungi"/>
</dbReference>
<dbReference type="GO" id="GO:0097255">
    <property type="term" value="C:R2TP complex"/>
    <property type="evidence" value="ECO:0007669"/>
    <property type="project" value="EnsemblFungi"/>
</dbReference>
<dbReference type="GO" id="GO:0000812">
    <property type="term" value="C:Swr1 complex"/>
    <property type="evidence" value="ECO:0007669"/>
    <property type="project" value="EnsemblFungi"/>
</dbReference>
<dbReference type="GO" id="GO:0043138">
    <property type="term" value="F:3'-5' DNA helicase activity"/>
    <property type="evidence" value="ECO:0007669"/>
    <property type="project" value="EnsemblFungi"/>
</dbReference>
<dbReference type="GO" id="GO:0043139">
    <property type="term" value="F:5'-3' DNA helicase activity"/>
    <property type="evidence" value="ECO:0007669"/>
    <property type="project" value="EnsemblFungi"/>
</dbReference>
<dbReference type="GO" id="GO:0005524">
    <property type="term" value="F:ATP binding"/>
    <property type="evidence" value="ECO:0007669"/>
    <property type="project" value="UniProtKB-KW"/>
</dbReference>
<dbReference type="GO" id="GO:0016887">
    <property type="term" value="F:ATP hydrolysis activity"/>
    <property type="evidence" value="ECO:0007669"/>
    <property type="project" value="InterPro"/>
</dbReference>
<dbReference type="GO" id="GO:0000492">
    <property type="term" value="P:box C/D snoRNP assembly"/>
    <property type="evidence" value="ECO:0007669"/>
    <property type="project" value="EnsemblFungi"/>
</dbReference>
<dbReference type="GO" id="GO:0006338">
    <property type="term" value="P:chromatin remodeling"/>
    <property type="evidence" value="ECO:0007669"/>
    <property type="project" value="EnsemblFungi"/>
</dbReference>
<dbReference type="GO" id="GO:0006281">
    <property type="term" value="P:DNA repair"/>
    <property type="evidence" value="ECO:0007669"/>
    <property type="project" value="UniProtKB-KW"/>
</dbReference>
<dbReference type="GO" id="GO:0006357">
    <property type="term" value="P:regulation of transcription by RNA polymerase II"/>
    <property type="evidence" value="ECO:0007669"/>
    <property type="project" value="EnsemblFungi"/>
</dbReference>
<dbReference type="GO" id="GO:0006364">
    <property type="term" value="P:rRNA processing"/>
    <property type="evidence" value="ECO:0007669"/>
    <property type="project" value="UniProtKB-KW"/>
</dbReference>
<dbReference type="FunFam" id="3.40.50.300:FF:002221">
    <property type="entry name" value="RuvB-like 2"/>
    <property type="match status" value="2"/>
</dbReference>
<dbReference type="FunFam" id="1.10.8.60:FF:000010">
    <property type="entry name" value="RuvB-like helicase"/>
    <property type="match status" value="1"/>
</dbReference>
<dbReference type="FunFam" id="2.40.50.360:FF:000002">
    <property type="entry name" value="RuvB-like helicase"/>
    <property type="match status" value="1"/>
</dbReference>
<dbReference type="Gene3D" id="1.10.8.60">
    <property type="match status" value="1"/>
</dbReference>
<dbReference type="Gene3D" id="3.40.50.300">
    <property type="entry name" value="P-loop containing nucleotide triphosphate hydrolases"/>
    <property type="match status" value="1"/>
</dbReference>
<dbReference type="Gene3D" id="2.40.50.360">
    <property type="entry name" value="RuvB-like helicase, domain II"/>
    <property type="match status" value="1"/>
</dbReference>
<dbReference type="InterPro" id="IPR003593">
    <property type="entry name" value="AAA+_ATPase"/>
</dbReference>
<dbReference type="InterPro" id="IPR027417">
    <property type="entry name" value="P-loop_NTPase"/>
</dbReference>
<dbReference type="InterPro" id="IPR027238">
    <property type="entry name" value="RuvB-like"/>
</dbReference>
<dbReference type="InterPro" id="IPR041048">
    <property type="entry name" value="RuvB-like_C"/>
</dbReference>
<dbReference type="InterPro" id="IPR042487">
    <property type="entry name" value="RuvBL1/2_DNA/RNA_bd_dom"/>
</dbReference>
<dbReference type="InterPro" id="IPR010339">
    <property type="entry name" value="TIP49_P-loop"/>
</dbReference>
<dbReference type="PANTHER" id="PTHR11093">
    <property type="entry name" value="RUVB-RELATED REPTIN AND PONTIN"/>
    <property type="match status" value="1"/>
</dbReference>
<dbReference type="Pfam" id="PF06068">
    <property type="entry name" value="TIP49"/>
    <property type="match status" value="1"/>
</dbReference>
<dbReference type="Pfam" id="PF17856">
    <property type="entry name" value="TIP49_C"/>
    <property type="match status" value="1"/>
</dbReference>
<dbReference type="SMART" id="SM00382">
    <property type="entry name" value="AAA"/>
    <property type="match status" value="1"/>
</dbReference>
<dbReference type="SUPFAM" id="SSF52540">
    <property type="entry name" value="P-loop containing nucleoside triphosphate hydrolases"/>
    <property type="match status" value="1"/>
</dbReference>
<feature type="chain" id="PRO_0000165665" description="RuvB-like helicase 2">
    <location>
        <begin position="1"/>
        <end position="476"/>
    </location>
</feature>
<feature type="binding site" evidence="1">
    <location>
        <begin position="76"/>
        <end position="83"/>
    </location>
    <ligand>
        <name>ATP</name>
        <dbReference type="ChEBI" id="CHEBI:30616"/>
    </ligand>
</feature>
<comment type="function">
    <text evidence="1">DNA helicase which participates in several chromatin remodeling complexes, including the SWR1 and the INO80 complexes. The SWR1 complex mediates the ATP-dependent exchange of histone H2A for the H2A variant HZT1 leading to transcriptional regulation of selected genes by chromatin remodeling. The INO80 complex remodels chromatin by shifting nucleosomes and is involved in DNA repair. Also involved in pre-rRNA processing (By similarity).</text>
</comment>
<comment type="catalytic activity">
    <reaction>
        <text>ATP + H2O = ADP + phosphate + H(+)</text>
        <dbReference type="Rhea" id="RHEA:13065"/>
        <dbReference type="ChEBI" id="CHEBI:15377"/>
        <dbReference type="ChEBI" id="CHEBI:15378"/>
        <dbReference type="ChEBI" id="CHEBI:30616"/>
        <dbReference type="ChEBI" id="CHEBI:43474"/>
        <dbReference type="ChEBI" id="CHEBI:456216"/>
        <dbReference type="EC" id="3.6.4.12"/>
    </reaction>
</comment>
<comment type="subunit">
    <text evidence="1">May form heterododecamers with RVB1. Component of the SWR1 chromatin remodeling complex, the INO80 chromatin remodeling complex, and of the R2TP complex (By similarity).</text>
</comment>
<comment type="subcellular location">
    <subcellularLocation>
        <location evidence="1">Nucleus</location>
    </subcellularLocation>
</comment>
<comment type="similarity">
    <text evidence="2">Belongs to the RuvB family.</text>
</comment>
<accession>Q6FSF1</accession>
<protein>
    <recommendedName>
        <fullName>RuvB-like helicase 2</fullName>
        <ecNumber>3.6.4.12</ecNumber>
    </recommendedName>
</protein>
<gene>
    <name type="primary">RVB2</name>
    <name type="ordered locus">CAGL0H01001g</name>
</gene>
<proteinExistence type="inferred from homology"/>